<feature type="chain" id="PRO_1000079908" description="Large ribosomal subunit protein uL29">
    <location>
        <begin position="1"/>
        <end position="67"/>
    </location>
</feature>
<protein>
    <recommendedName>
        <fullName evidence="1">Large ribosomal subunit protein uL29</fullName>
    </recommendedName>
    <alternativeName>
        <fullName evidence="2">50S ribosomal protein L29</fullName>
    </alternativeName>
</protein>
<organism>
    <name type="scientific">Sorangium cellulosum (strain So ce56)</name>
    <name type="common">Polyangium cellulosum (strain So ce56)</name>
    <dbReference type="NCBI Taxonomy" id="448385"/>
    <lineage>
        <taxon>Bacteria</taxon>
        <taxon>Pseudomonadati</taxon>
        <taxon>Myxococcota</taxon>
        <taxon>Polyangia</taxon>
        <taxon>Polyangiales</taxon>
        <taxon>Polyangiaceae</taxon>
        <taxon>Sorangium</taxon>
    </lineage>
</organism>
<sequence length="67" mass="7828">MKAKDLRERTTEHLRELEKSLAAGLFEARFKNFTNRLNDTATIRKAKRDLARVKTILTQRARAEEKA</sequence>
<keyword id="KW-1185">Reference proteome</keyword>
<keyword id="KW-0687">Ribonucleoprotein</keyword>
<keyword id="KW-0689">Ribosomal protein</keyword>
<dbReference type="EMBL" id="AM746676">
    <property type="protein sequence ID" value="CAN98125.1"/>
    <property type="molecule type" value="Genomic_DNA"/>
</dbReference>
<dbReference type="RefSeq" id="WP_012240564.1">
    <property type="nucleotide sequence ID" value="NC_010162.1"/>
</dbReference>
<dbReference type="SMR" id="A9FGI9"/>
<dbReference type="STRING" id="448385.sce7955"/>
<dbReference type="KEGG" id="scl:sce7955"/>
<dbReference type="eggNOG" id="COG0255">
    <property type="taxonomic scope" value="Bacteria"/>
</dbReference>
<dbReference type="HOGENOM" id="CLU_158491_1_0_7"/>
<dbReference type="OrthoDB" id="9815192at2"/>
<dbReference type="BioCyc" id="SCEL448385:SCE_RS40715-MONOMER"/>
<dbReference type="Proteomes" id="UP000002139">
    <property type="component" value="Chromosome"/>
</dbReference>
<dbReference type="GO" id="GO:1990904">
    <property type="term" value="C:ribonucleoprotein complex"/>
    <property type="evidence" value="ECO:0007669"/>
    <property type="project" value="UniProtKB-KW"/>
</dbReference>
<dbReference type="GO" id="GO:0005840">
    <property type="term" value="C:ribosome"/>
    <property type="evidence" value="ECO:0007669"/>
    <property type="project" value="UniProtKB-KW"/>
</dbReference>
<dbReference type="GO" id="GO:0003735">
    <property type="term" value="F:structural constituent of ribosome"/>
    <property type="evidence" value="ECO:0007669"/>
    <property type="project" value="InterPro"/>
</dbReference>
<dbReference type="GO" id="GO:0006412">
    <property type="term" value="P:translation"/>
    <property type="evidence" value="ECO:0007669"/>
    <property type="project" value="UniProtKB-UniRule"/>
</dbReference>
<dbReference type="Gene3D" id="1.10.287.310">
    <property type="match status" value="1"/>
</dbReference>
<dbReference type="HAMAP" id="MF_00374">
    <property type="entry name" value="Ribosomal_uL29"/>
    <property type="match status" value="1"/>
</dbReference>
<dbReference type="InterPro" id="IPR001854">
    <property type="entry name" value="Ribosomal_uL29"/>
</dbReference>
<dbReference type="InterPro" id="IPR036049">
    <property type="entry name" value="Ribosomal_uL29_sf"/>
</dbReference>
<dbReference type="NCBIfam" id="TIGR00012">
    <property type="entry name" value="L29"/>
    <property type="match status" value="1"/>
</dbReference>
<dbReference type="Pfam" id="PF00831">
    <property type="entry name" value="Ribosomal_L29"/>
    <property type="match status" value="1"/>
</dbReference>
<dbReference type="SUPFAM" id="SSF46561">
    <property type="entry name" value="Ribosomal protein L29 (L29p)"/>
    <property type="match status" value="1"/>
</dbReference>
<accession>A9FGI9</accession>
<reference key="1">
    <citation type="journal article" date="2007" name="Nat. Biotechnol.">
        <title>Complete genome sequence of the myxobacterium Sorangium cellulosum.</title>
        <authorList>
            <person name="Schneiker S."/>
            <person name="Perlova O."/>
            <person name="Kaiser O."/>
            <person name="Gerth K."/>
            <person name="Alici A."/>
            <person name="Altmeyer M.O."/>
            <person name="Bartels D."/>
            <person name="Bekel T."/>
            <person name="Beyer S."/>
            <person name="Bode E."/>
            <person name="Bode H.B."/>
            <person name="Bolten C.J."/>
            <person name="Choudhuri J.V."/>
            <person name="Doss S."/>
            <person name="Elnakady Y.A."/>
            <person name="Frank B."/>
            <person name="Gaigalat L."/>
            <person name="Goesmann A."/>
            <person name="Groeger C."/>
            <person name="Gross F."/>
            <person name="Jelsbak L."/>
            <person name="Jelsbak L."/>
            <person name="Kalinowski J."/>
            <person name="Kegler C."/>
            <person name="Knauber T."/>
            <person name="Konietzny S."/>
            <person name="Kopp M."/>
            <person name="Krause L."/>
            <person name="Krug D."/>
            <person name="Linke B."/>
            <person name="Mahmud T."/>
            <person name="Martinez-Arias R."/>
            <person name="McHardy A.C."/>
            <person name="Merai M."/>
            <person name="Meyer F."/>
            <person name="Mormann S."/>
            <person name="Munoz-Dorado J."/>
            <person name="Perez J."/>
            <person name="Pradella S."/>
            <person name="Rachid S."/>
            <person name="Raddatz G."/>
            <person name="Rosenau F."/>
            <person name="Rueckert C."/>
            <person name="Sasse F."/>
            <person name="Scharfe M."/>
            <person name="Schuster S.C."/>
            <person name="Suen G."/>
            <person name="Treuner-Lange A."/>
            <person name="Velicer G.J."/>
            <person name="Vorholter F.-J."/>
            <person name="Weissman K.J."/>
            <person name="Welch R.D."/>
            <person name="Wenzel S.C."/>
            <person name="Whitworth D.E."/>
            <person name="Wilhelm S."/>
            <person name="Wittmann C."/>
            <person name="Bloecker H."/>
            <person name="Puehler A."/>
            <person name="Mueller R."/>
        </authorList>
    </citation>
    <scope>NUCLEOTIDE SEQUENCE [LARGE SCALE GENOMIC DNA]</scope>
    <source>
        <strain>So ce56</strain>
    </source>
</reference>
<comment type="similarity">
    <text evidence="1">Belongs to the universal ribosomal protein uL29 family.</text>
</comment>
<gene>
    <name evidence="1" type="primary">rpmC</name>
    <name type="ordered locus">sce7955</name>
</gene>
<proteinExistence type="inferred from homology"/>
<evidence type="ECO:0000255" key="1">
    <source>
        <dbReference type="HAMAP-Rule" id="MF_00374"/>
    </source>
</evidence>
<evidence type="ECO:0000305" key="2"/>
<name>RL29_SORC5</name>